<organism>
    <name type="scientific">Thalassarche impavida</name>
    <name type="common">Albatross</name>
    <name type="synonym">Diomeda impavida</name>
    <dbReference type="NCBI Taxonomy" id="79646"/>
    <lineage>
        <taxon>Eukaryota</taxon>
        <taxon>Metazoa</taxon>
        <taxon>Chordata</taxon>
        <taxon>Craniata</taxon>
        <taxon>Vertebrata</taxon>
        <taxon>Euteleostomi</taxon>
        <taxon>Archelosauria</taxon>
        <taxon>Archosauria</taxon>
        <taxon>Dinosauria</taxon>
        <taxon>Saurischia</taxon>
        <taxon>Theropoda</taxon>
        <taxon>Coelurosauria</taxon>
        <taxon>Aves</taxon>
        <taxon>Neognathae</taxon>
        <taxon>Neoaves</taxon>
        <taxon>Aequornithes</taxon>
        <taxon>Procellariiformes</taxon>
        <taxon>Diomedeidae</taxon>
        <taxon>Thalassarche</taxon>
    </lineage>
</organism>
<reference key="1">
    <citation type="journal article" date="1998" name="Mol. Biol. Evol.">
        <title>Body size effects and rates of cytochrome-b evolution in tube-nosed seabirds.</title>
        <authorList>
            <person name="Nunn G.B."/>
            <person name="Stanley S.E."/>
        </authorList>
    </citation>
    <scope>NUCLEOTIDE SEQUENCE [GENOMIC DNA]</scope>
    <source>
        <strain>Isolate DMIC</strain>
    </source>
</reference>
<evidence type="ECO:0000250" key="1"/>
<evidence type="ECO:0000250" key="2">
    <source>
        <dbReference type="UniProtKB" id="P00157"/>
    </source>
</evidence>
<evidence type="ECO:0000255" key="3">
    <source>
        <dbReference type="PROSITE-ProRule" id="PRU00967"/>
    </source>
</evidence>
<evidence type="ECO:0000255" key="4">
    <source>
        <dbReference type="PROSITE-ProRule" id="PRU00968"/>
    </source>
</evidence>
<proteinExistence type="inferred from homology"/>
<keyword id="KW-0249">Electron transport</keyword>
<keyword id="KW-0349">Heme</keyword>
<keyword id="KW-0408">Iron</keyword>
<keyword id="KW-0472">Membrane</keyword>
<keyword id="KW-0479">Metal-binding</keyword>
<keyword id="KW-0496">Mitochondrion</keyword>
<keyword id="KW-0999">Mitochondrion inner membrane</keyword>
<keyword id="KW-0679">Respiratory chain</keyword>
<keyword id="KW-0812">Transmembrane</keyword>
<keyword id="KW-1133">Transmembrane helix</keyword>
<keyword id="KW-0813">Transport</keyword>
<keyword id="KW-0830">Ubiquinone</keyword>
<accession>O79229</accession>
<dbReference type="EMBL" id="AF076093">
    <property type="protein sequence ID" value="AAC68650.1"/>
    <property type="molecule type" value="Genomic_DNA"/>
</dbReference>
<dbReference type="SMR" id="O79229"/>
<dbReference type="GO" id="GO:0005743">
    <property type="term" value="C:mitochondrial inner membrane"/>
    <property type="evidence" value="ECO:0007669"/>
    <property type="project" value="UniProtKB-SubCell"/>
</dbReference>
<dbReference type="GO" id="GO:0045275">
    <property type="term" value="C:respiratory chain complex III"/>
    <property type="evidence" value="ECO:0007669"/>
    <property type="project" value="InterPro"/>
</dbReference>
<dbReference type="GO" id="GO:0046872">
    <property type="term" value="F:metal ion binding"/>
    <property type="evidence" value="ECO:0007669"/>
    <property type="project" value="UniProtKB-KW"/>
</dbReference>
<dbReference type="GO" id="GO:0008121">
    <property type="term" value="F:ubiquinol-cytochrome-c reductase activity"/>
    <property type="evidence" value="ECO:0007669"/>
    <property type="project" value="InterPro"/>
</dbReference>
<dbReference type="GO" id="GO:0006122">
    <property type="term" value="P:mitochondrial electron transport, ubiquinol to cytochrome c"/>
    <property type="evidence" value="ECO:0007669"/>
    <property type="project" value="TreeGrafter"/>
</dbReference>
<dbReference type="CDD" id="cd00290">
    <property type="entry name" value="cytochrome_b_C"/>
    <property type="match status" value="1"/>
</dbReference>
<dbReference type="CDD" id="cd00284">
    <property type="entry name" value="Cytochrome_b_N"/>
    <property type="match status" value="1"/>
</dbReference>
<dbReference type="FunFam" id="1.20.810.10:FF:000002">
    <property type="entry name" value="Cytochrome b"/>
    <property type="match status" value="1"/>
</dbReference>
<dbReference type="Gene3D" id="1.20.810.10">
    <property type="entry name" value="Cytochrome Bc1 Complex, Chain C"/>
    <property type="match status" value="1"/>
</dbReference>
<dbReference type="InterPro" id="IPR005798">
    <property type="entry name" value="Cyt_b/b6_C"/>
</dbReference>
<dbReference type="InterPro" id="IPR036150">
    <property type="entry name" value="Cyt_b/b6_C_sf"/>
</dbReference>
<dbReference type="InterPro" id="IPR005797">
    <property type="entry name" value="Cyt_b/b6_N"/>
</dbReference>
<dbReference type="InterPro" id="IPR027387">
    <property type="entry name" value="Cytb/b6-like_sf"/>
</dbReference>
<dbReference type="InterPro" id="IPR030689">
    <property type="entry name" value="Cytochrome_b"/>
</dbReference>
<dbReference type="InterPro" id="IPR048260">
    <property type="entry name" value="Cytochrome_b_C_euk/bac"/>
</dbReference>
<dbReference type="InterPro" id="IPR048259">
    <property type="entry name" value="Cytochrome_b_N_euk/bac"/>
</dbReference>
<dbReference type="InterPro" id="IPR016174">
    <property type="entry name" value="Di-haem_cyt_TM"/>
</dbReference>
<dbReference type="PANTHER" id="PTHR19271">
    <property type="entry name" value="CYTOCHROME B"/>
    <property type="match status" value="1"/>
</dbReference>
<dbReference type="PANTHER" id="PTHR19271:SF16">
    <property type="entry name" value="CYTOCHROME B"/>
    <property type="match status" value="1"/>
</dbReference>
<dbReference type="Pfam" id="PF00032">
    <property type="entry name" value="Cytochrom_B_C"/>
    <property type="match status" value="1"/>
</dbReference>
<dbReference type="Pfam" id="PF00033">
    <property type="entry name" value="Cytochrome_B"/>
    <property type="match status" value="1"/>
</dbReference>
<dbReference type="PIRSF" id="PIRSF038885">
    <property type="entry name" value="COB"/>
    <property type="match status" value="1"/>
</dbReference>
<dbReference type="SUPFAM" id="SSF81648">
    <property type="entry name" value="a domain/subunit of cytochrome bc1 complex (Ubiquinol-cytochrome c reductase)"/>
    <property type="match status" value="1"/>
</dbReference>
<dbReference type="SUPFAM" id="SSF81342">
    <property type="entry name" value="Transmembrane di-heme cytochromes"/>
    <property type="match status" value="1"/>
</dbReference>
<dbReference type="PROSITE" id="PS51003">
    <property type="entry name" value="CYTB_CTER"/>
    <property type="match status" value="1"/>
</dbReference>
<dbReference type="PROSITE" id="PS51002">
    <property type="entry name" value="CYTB_NTER"/>
    <property type="match status" value="1"/>
</dbReference>
<feature type="chain" id="PRO_0000061657" description="Cytochrome b">
    <location>
        <begin position="1"/>
        <end position="380"/>
    </location>
</feature>
<feature type="transmembrane region" description="Helical" evidence="2">
    <location>
        <begin position="34"/>
        <end position="54"/>
    </location>
</feature>
<feature type="transmembrane region" description="Helical" evidence="2">
    <location>
        <begin position="78"/>
        <end position="99"/>
    </location>
</feature>
<feature type="transmembrane region" description="Helical" evidence="2">
    <location>
        <begin position="114"/>
        <end position="134"/>
    </location>
</feature>
<feature type="transmembrane region" description="Helical" evidence="2">
    <location>
        <begin position="179"/>
        <end position="199"/>
    </location>
</feature>
<feature type="transmembrane region" description="Helical" evidence="2">
    <location>
        <begin position="227"/>
        <end position="247"/>
    </location>
</feature>
<feature type="transmembrane region" description="Helical" evidence="2">
    <location>
        <begin position="289"/>
        <end position="309"/>
    </location>
</feature>
<feature type="transmembrane region" description="Helical" evidence="2">
    <location>
        <begin position="321"/>
        <end position="341"/>
    </location>
</feature>
<feature type="transmembrane region" description="Helical" evidence="2">
    <location>
        <begin position="348"/>
        <end position="368"/>
    </location>
</feature>
<feature type="binding site" description="axial binding residue" evidence="2">
    <location>
        <position position="84"/>
    </location>
    <ligand>
        <name>heme b</name>
        <dbReference type="ChEBI" id="CHEBI:60344"/>
        <label>b562</label>
    </ligand>
    <ligandPart>
        <name>Fe</name>
        <dbReference type="ChEBI" id="CHEBI:18248"/>
    </ligandPart>
</feature>
<feature type="binding site" description="axial binding residue" evidence="2">
    <location>
        <position position="98"/>
    </location>
    <ligand>
        <name>heme b</name>
        <dbReference type="ChEBI" id="CHEBI:60344"/>
        <label>b566</label>
    </ligand>
    <ligandPart>
        <name>Fe</name>
        <dbReference type="ChEBI" id="CHEBI:18248"/>
    </ligandPart>
</feature>
<feature type="binding site" description="axial binding residue" evidence="2">
    <location>
        <position position="183"/>
    </location>
    <ligand>
        <name>heme b</name>
        <dbReference type="ChEBI" id="CHEBI:60344"/>
        <label>b562</label>
    </ligand>
    <ligandPart>
        <name>Fe</name>
        <dbReference type="ChEBI" id="CHEBI:18248"/>
    </ligandPart>
</feature>
<feature type="binding site" description="axial binding residue" evidence="2">
    <location>
        <position position="197"/>
    </location>
    <ligand>
        <name>heme b</name>
        <dbReference type="ChEBI" id="CHEBI:60344"/>
        <label>b566</label>
    </ligand>
    <ligandPart>
        <name>Fe</name>
        <dbReference type="ChEBI" id="CHEBI:18248"/>
    </ligandPart>
</feature>
<feature type="binding site" evidence="2">
    <location>
        <position position="202"/>
    </location>
    <ligand>
        <name>a ubiquinone</name>
        <dbReference type="ChEBI" id="CHEBI:16389"/>
    </ligand>
</feature>
<geneLocation type="mitochondrion"/>
<comment type="function">
    <text evidence="2">Component of the ubiquinol-cytochrome c reductase complex (complex III or cytochrome b-c1 complex) that is part of the mitochondrial respiratory chain. The b-c1 complex mediates electron transfer from ubiquinol to cytochrome c. Contributes to the generation of a proton gradient across the mitochondrial membrane that is then used for ATP synthesis.</text>
</comment>
<comment type="cofactor">
    <cofactor evidence="2">
        <name>heme b</name>
        <dbReference type="ChEBI" id="CHEBI:60344"/>
    </cofactor>
    <text evidence="2">Binds 2 heme b groups non-covalently.</text>
</comment>
<comment type="subunit">
    <text evidence="2">The cytochrome bc1 complex contains 11 subunits: 3 respiratory subunits (MT-CYB, CYC1 and UQCRFS1), 2 core proteins (UQCRC1 and UQCRC2) and 6 low-molecular weight proteins (UQCRH/QCR6, UQCRB/QCR7, UQCRQ/QCR8, UQCR10/QCR9, UQCR11/QCR10 and a cleavage product of UQCRFS1). This cytochrome bc1 complex then forms a dimer.</text>
</comment>
<comment type="subcellular location">
    <subcellularLocation>
        <location evidence="2">Mitochondrion inner membrane</location>
        <topology evidence="2">Multi-pass membrane protein</topology>
    </subcellularLocation>
</comment>
<comment type="miscellaneous">
    <text evidence="1">Heme 1 (or BL or b562) is low-potential and absorbs at about 562 nm, and heme 2 (or BH or b566) is high-potential and absorbs at about 566 nm.</text>
</comment>
<comment type="similarity">
    <text evidence="3 4">Belongs to the cytochrome b family.</text>
</comment>
<comment type="caution">
    <text evidence="2">The full-length protein contains only eight transmembrane helices, not nine as predicted by bioinformatics tools.</text>
</comment>
<protein>
    <recommendedName>
        <fullName>Cytochrome b</fullName>
    </recommendedName>
    <alternativeName>
        <fullName>Complex III subunit 3</fullName>
    </alternativeName>
    <alternativeName>
        <fullName>Complex III subunit III</fullName>
    </alternativeName>
    <alternativeName>
        <fullName>Cytochrome b-c1 complex subunit 3</fullName>
    </alternativeName>
    <alternativeName>
        <fullName>Ubiquinol-cytochrome-c reductase complex cytochrome b subunit</fullName>
    </alternativeName>
</protein>
<gene>
    <name type="primary">MT-CYB</name>
    <name type="synonym">COB</name>
    <name type="synonym">CYTB</name>
    <name type="synonym">MTCYB</name>
</gene>
<name>CYB_THAIM</name>
<sequence length="380" mass="42663">MAPNLRKSHPLLKMINNSLIDLPTPSNISAWWNFGSLLGICLMTQILTGLLLAMHYTADTTLAFSSIAHTCRNVQYGWLIRNLHANGASFFFICIYLHIGRGFYYGSYLNKETWNTGILLLLTLMATAFVGYVLPWGQMSFWGATVITNLFSAIPYIGQTLVEWAWGGFSVDNPTLTRFFALHFLLPFMIAGLTLIHLTFLHESGSNNPLGILSNCDKIPFHPYFTLKDILGFTLMFLPLTALALFSPTLLGDPENFTPANPLVTPPHIKPEWYFLFAYAILRSIPNKLGGVLALAASVLVLFLSPLLHKSKQRTLTFRPLSQLLFWLLVTNLFILTWIGSQPVEHPFIIIGQLASITYFTILLVLFPTIAALENKMLNY</sequence>